<accession>Q7T0L7</accession>
<gene>
    <name type="primary">bcdin3d</name>
</gene>
<evidence type="ECO:0000250" key="1">
    <source>
        <dbReference type="UniProtKB" id="Q7Z5W3"/>
    </source>
</evidence>
<evidence type="ECO:0000255" key="2">
    <source>
        <dbReference type="PROSITE-ProRule" id="PRU00848"/>
    </source>
</evidence>
<evidence type="ECO:0000305" key="3"/>
<keyword id="KW-0963">Cytoplasm</keyword>
<keyword id="KW-0489">Methyltransferase</keyword>
<keyword id="KW-1185">Reference proteome</keyword>
<keyword id="KW-0949">S-adenosyl-L-methionine</keyword>
<keyword id="KW-0808">Transferase</keyword>
<name>BN3D2_XENLA</name>
<reference key="1">
    <citation type="submission" date="2003-08" db="EMBL/GenBank/DDBJ databases">
        <authorList>
            <consortium name="NIH - Xenopus Gene Collection (XGC) project"/>
        </authorList>
    </citation>
    <scope>NUCLEOTIDE SEQUENCE [LARGE SCALE MRNA]</scope>
    <source>
        <tissue>Ovary</tissue>
    </source>
</reference>
<proteinExistence type="evidence at transcript level"/>
<sequence length="255" mass="28629">MSNSESVPHVDPGAAPYGNFPNYYSFNPPENRISLLPAELLHKLFRKPAESDSSTQPLLGLDVGCNTGDLSVALYNHLTEPHSKSSDVPVHFLCCDIDPDLITRARASNPFPDFISYATLDIMDSSAVRGPVNDFLQQFARSTFDIAFCMSVTMWIHLNYGDQGLVTFLGHLANLCDYLLVEPQPWKCYRSAARRLRKLGRQDFDHFHSLSIRGDMAENITQILTAEGAAKLIHIFGNTSWDRSLLLFKIQRHPC</sequence>
<feature type="chain" id="PRO_0000420471" description="Pre-miRNA 5'-monophosphate methyltransferase">
    <location>
        <begin position="1"/>
        <end position="255"/>
    </location>
</feature>
<feature type="domain" description="Bin3-type SAM" evidence="2">
    <location>
        <begin position="41"/>
        <end position="253"/>
    </location>
</feature>
<feature type="binding site" evidence="1">
    <location>
        <position position="32"/>
    </location>
    <ligand>
        <name>S-adenosyl-L-methionine</name>
        <dbReference type="ChEBI" id="CHEBI:59789"/>
    </ligand>
</feature>
<feature type="binding site" evidence="1">
    <location>
        <position position="66"/>
    </location>
    <ligand>
        <name>S-adenosyl-L-methionine</name>
        <dbReference type="ChEBI" id="CHEBI:59789"/>
    </ligand>
</feature>
<feature type="binding site" evidence="1">
    <location>
        <position position="96"/>
    </location>
    <ligand>
        <name>S-adenosyl-L-methionine</name>
        <dbReference type="ChEBI" id="CHEBI:59789"/>
    </ligand>
</feature>
<feature type="binding site" evidence="1">
    <location>
        <begin position="121"/>
        <end position="122"/>
    </location>
    <ligand>
        <name>S-adenosyl-L-methionine</name>
        <dbReference type="ChEBI" id="CHEBI:59789"/>
    </ligand>
</feature>
<feature type="binding site" evidence="1">
    <location>
        <position position="150"/>
    </location>
    <ligand>
        <name>S-adenosyl-L-methionine</name>
        <dbReference type="ChEBI" id="CHEBI:59789"/>
    </ligand>
</feature>
<comment type="function">
    <text evidence="1">O-methyltransferase that specifically monomethylates 5'-monophosphate of cytoplasmic histidyl tRNA (tRNA(His)), acting as a capping enzyme by protecting tRNA(His) from cleavage by DICER1. Also able, with less efficiently, to methylate the 5' monophosphate of a subset of pre-miRNAs, acting as a negative regulator of miRNA processing. The 5' monophosphate of pre-miRNAs is recognized by DICER1 and is required for pre-miRNAs processing: methylation at this position reduces the processing of pre-miRNAs by DICER1. Was also reported to mediate dimethylation of pre-miR-145; however dimethylation cannot be reproduced by another group which observes a monomethylation of pre-miR-145.</text>
</comment>
<comment type="catalytic activity">
    <reaction evidence="1">
        <text>a 5'-end 5'-phospho-ribonucleoside-RNA + S-adenosyl-L-methionine = a 5'-end (5'-methylphospho)-ribonucleoside-RNA + S-adenosyl-L-homocysteine</text>
        <dbReference type="Rhea" id="RHEA:58656"/>
        <dbReference type="Rhea" id="RHEA-COMP:15179"/>
        <dbReference type="Rhea" id="RHEA-COMP:15181"/>
        <dbReference type="ChEBI" id="CHEBI:57856"/>
        <dbReference type="ChEBI" id="CHEBI:59789"/>
        <dbReference type="ChEBI" id="CHEBI:138282"/>
        <dbReference type="ChEBI" id="CHEBI:142776"/>
    </reaction>
</comment>
<comment type="catalytic activity">
    <reaction evidence="1">
        <text>a 5'-end 5'-phospho-ribonucleoside-RNA + 2 S-adenosyl-L-methionine = a 5'-end (5'-bismethylphospho)-ribonucleoside-RNA + 2 S-adenosyl-L-homocysteine</text>
        <dbReference type="Rhea" id="RHEA:58640"/>
        <dbReference type="Rhea" id="RHEA-COMP:15179"/>
        <dbReference type="Rhea" id="RHEA-COMP:15182"/>
        <dbReference type="ChEBI" id="CHEBI:57856"/>
        <dbReference type="ChEBI" id="CHEBI:59789"/>
        <dbReference type="ChEBI" id="CHEBI:138282"/>
        <dbReference type="ChEBI" id="CHEBI:142777"/>
    </reaction>
</comment>
<comment type="subcellular location">
    <subcellularLocation>
        <location evidence="1">Cytoplasm</location>
    </subcellularLocation>
</comment>
<comment type="similarity">
    <text evidence="3">Belongs to the methyltransferase superfamily.</text>
</comment>
<dbReference type="EC" id="2.1.1.-"/>
<dbReference type="EMBL" id="BC056133">
    <property type="protein sequence ID" value="AAH56133.1"/>
    <property type="molecule type" value="mRNA"/>
</dbReference>
<dbReference type="RefSeq" id="NP_001079900.1">
    <property type="nucleotide sequence ID" value="NM_001086431.1"/>
</dbReference>
<dbReference type="SMR" id="Q7T0L7"/>
<dbReference type="DNASU" id="379590"/>
<dbReference type="GeneID" id="379590"/>
<dbReference type="KEGG" id="xla:379590"/>
<dbReference type="AGR" id="Xenbase:XB-GENE-5859397"/>
<dbReference type="CTD" id="379590"/>
<dbReference type="Xenbase" id="XB-GENE-5859397">
    <property type="gene designation" value="bcdin3d.L"/>
</dbReference>
<dbReference type="OMA" id="LNHHDQG"/>
<dbReference type="OrthoDB" id="273070at2759"/>
<dbReference type="Proteomes" id="UP000186698">
    <property type="component" value="Chromosome 2L"/>
</dbReference>
<dbReference type="Bgee" id="379590">
    <property type="expression patterns" value="Expressed in oocyte and 19 other cell types or tissues"/>
</dbReference>
<dbReference type="GO" id="GO:0005737">
    <property type="term" value="C:cytoplasm"/>
    <property type="evidence" value="ECO:0000250"/>
    <property type="project" value="UniProtKB"/>
</dbReference>
<dbReference type="GO" id="GO:0008171">
    <property type="term" value="F:O-methyltransferase activity"/>
    <property type="evidence" value="ECO:0000318"/>
    <property type="project" value="GO_Central"/>
</dbReference>
<dbReference type="GO" id="GO:0008173">
    <property type="term" value="F:RNA methyltransferase activity"/>
    <property type="evidence" value="ECO:0000250"/>
    <property type="project" value="UniProtKB"/>
</dbReference>
<dbReference type="GO" id="GO:0090486">
    <property type="term" value="F:small RNA 2'-O-methyltransferase activity"/>
    <property type="evidence" value="ECO:0000250"/>
    <property type="project" value="UniProtKB"/>
</dbReference>
<dbReference type="GO" id="GO:0032259">
    <property type="term" value="P:methylation"/>
    <property type="evidence" value="ECO:0007669"/>
    <property type="project" value="UniProtKB-KW"/>
</dbReference>
<dbReference type="GO" id="GO:2000632">
    <property type="term" value="P:negative regulation of pre-miRNA processing"/>
    <property type="evidence" value="ECO:0000250"/>
    <property type="project" value="UniProtKB"/>
</dbReference>
<dbReference type="CDD" id="cd02440">
    <property type="entry name" value="AdoMet_MTases"/>
    <property type="match status" value="1"/>
</dbReference>
<dbReference type="FunFam" id="3.40.50.150:FF:000138">
    <property type="entry name" value="BCDIN3 domain containing RNA methyltransferase"/>
    <property type="match status" value="1"/>
</dbReference>
<dbReference type="Gene3D" id="3.40.50.150">
    <property type="entry name" value="Vaccinia Virus protein VP39"/>
    <property type="match status" value="1"/>
</dbReference>
<dbReference type="InterPro" id="IPR039772">
    <property type="entry name" value="Bin3-like"/>
</dbReference>
<dbReference type="InterPro" id="IPR010675">
    <property type="entry name" value="Bin3_C"/>
</dbReference>
<dbReference type="InterPro" id="IPR024160">
    <property type="entry name" value="BIN3_SAM-bd_dom"/>
</dbReference>
<dbReference type="InterPro" id="IPR029063">
    <property type="entry name" value="SAM-dependent_MTases_sf"/>
</dbReference>
<dbReference type="PANTHER" id="PTHR12315">
    <property type="entry name" value="BICOID-INTERACTING PROTEIN RELATED"/>
    <property type="match status" value="1"/>
</dbReference>
<dbReference type="PANTHER" id="PTHR12315:SF1">
    <property type="entry name" value="RNA 5'-MONOPHOSPHATE METHYLTRANSFERASE"/>
    <property type="match status" value="1"/>
</dbReference>
<dbReference type="Pfam" id="PF06859">
    <property type="entry name" value="Bin3"/>
    <property type="match status" value="1"/>
</dbReference>
<dbReference type="SUPFAM" id="SSF53335">
    <property type="entry name" value="S-adenosyl-L-methionine-dependent methyltransferases"/>
    <property type="match status" value="1"/>
</dbReference>
<dbReference type="PROSITE" id="PS51515">
    <property type="entry name" value="BIN3_SAM"/>
    <property type="match status" value="1"/>
</dbReference>
<organism>
    <name type="scientific">Xenopus laevis</name>
    <name type="common">African clawed frog</name>
    <dbReference type="NCBI Taxonomy" id="8355"/>
    <lineage>
        <taxon>Eukaryota</taxon>
        <taxon>Metazoa</taxon>
        <taxon>Chordata</taxon>
        <taxon>Craniata</taxon>
        <taxon>Vertebrata</taxon>
        <taxon>Euteleostomi</taxon>
        <taxon>Amphibia</taxon>
        <taxon>Batrachia</taxon>
        <taxon>Anura</taxon>
        <taxon>Pipoidea</taxon>
        <taxon>Pipidae</taxon>
        <taxon>Xenopodinae</taxon>
        <taxon>Xenopus</taxon>
        <taxon>Xenopus</taxon>
    </lineage>
</organism>
<protein>
    <recommendedName>
        <fullName>Pre-miRNA 5'-monophosphate methyltransferase</fullName>
        <ecNumber>2.1.1.-</ecNumber>
    </recommendedName>
    <alternativeName>
        <fullName>BCDIN3 domain-containing protein</fullName>
    </alternativeName>
</protein>